<gene>
    <name evidence="1" type="primary">engB</name>
    <name type="ordered locus">HPSH_08165</name>
</gene>
<reference key="1">
    <citation type="submission" date="2008-05" db="EMBL/GenBank/DDBJ databases">
        <title>Genome sequence of Helicobacter pylori from the remote Amazon: traces of Asian ancestry of the first Americans.</title>
        <authorList>
            <person name="Kersulyte D."/>
            <person name="Kalia A."/>
            <person name="Gilman R.H."/>
            <person name="Berg D.E."/>
        </authorList>
    </citation>
    <scope>NUCLEOTIDE SEQUENCE [LARGE SCALE GENOMIC DNA]</scope>
    <source>
        <strain>Shi470</strain>
    </source>
</reference>
<organism>
    <name type="scientific">Helicobacter pylori (strain Shi470)</name>
    <dbReference type="NCBI Taxonomy" id="512562"/>
    <lineage>
        <taxon>Bacteria</taxon>
        <taxon>Pseudomonadati</taxon>
        <taxon>Campylobacterota</taxon>
        <taxon>Epsilonproteobacteria</taxon>
        <taxon>Campylobacterales</taxon>
        <taxon>Helicobacteraceae</taxon>
        <taxon>Helicobacter</taxon>
    </lineage>
</organism>
<proteinExistence type="inferred from homology"/>
<name>ENGB_HELPS</name>
<evidence type="ECO:0000255" key="1">
    <source>
        <dbReference type="HAMAP-Rule" id="MF_00321"/>
    </source>
</evidence>
<comment type="function">
    <text evidence="1">Necessary for normal cell division and for the maintenance of normal septation.</text>
</comment>
<comment type="cofactor">
    <cofactor evidence="1">
        <name>Mg(2+)</name>
        <dbReference type="ChEBI" id="CHEBI:18420"/>
    </cofactor>
</comment>
<comment type="similarity">
    <text evidence="1">Belongs to the TRAFAC class TrmE-Era-EngA-EngB-Septin-like GTPase superfamily. EngB GTPase family.</text>
</comment>
<feature type="chain" id="PRO_1000115980" description="Probable GTP-binding protein EngB">
    <location>
        <begin position="1"/>
        <end position="208"/>
    </location>
</feature>
<feature type="domain" description="EngB-type G" evidence="1">
    <location>
        <begin position="23"/>
        <end position="205"/>
    </location>
</feature>
<feature type="binding site" evidence="1">
    <location>
        <begin position="31"/>
        <end position="38"/>
    </location>
    <ligand>
        <name>GTP</name>
        <dbReference type="ChEBI" id="CHEBI:37565"/>
    </ligand>
</feature>
<feature type="binding site" evidence="1">
    <location>
        <position position="38"/>
    </location>
    <ligand>
        <name>Mg(2+)</name>
        <dbReference type="ChEBI" id="CHEBI:18420"/>
    </ligand>
</feature>
<feature type="binding site" evidence="1">
    <location>
        <begin position="57"/>
        <end position="61"/>
    </location>
    <ligand>
        <name>GTP</name>
        <dbReference type="ChEBI" id="CHEBI:37565"/>
    </ligand>
</feature>
<feature type="binding site" evidence="1">
    <location>
        <position position="59"/>
    </location>
    <ligand>
        <name>Mg(2+)</name>
        <dbReference type="ChEBI" id="CHEBI:18420"/>
    </ligand>
</feature>
<feature type="binding site" evidence="1">
    <location>
        <begin position="84"/>
        <end position="87"/>
    </location>
    <ligand>
        <name>GTP</name>
        <dbReference type="ChEBI" id="CHEBI:37565"/>
    </ligand>
</feature>
<feature type="binding site" evidence="1">
    <location>
        <begin position="154"/>
        <end position="157"/>
    </location>
    <ligand>
        <name>GTP</name>
        <dbReference type="ChEBI" id="CHEBI:37565"/>
    </ligand>
</feature>
<feature type="binding site" evidence="1">
    <location>
        <begin position="182"/>
        <end position="184"/>
    </location>
    <ligand>
        <name>GTP</name>
        <dbReference type="ChEBI" id="CHEBI:37565"/>
    </ligand>
</feature>
<sequence>MIAIKDAHFLTSSGQLSQCPASLTSEMVILGRSNVGKSSFINTLLGKNLAKSSATPGKTRLANFFSTTWEDKENALRATFNVIDLPGFGYAKVSKSLKKEWEGFLWELLSVRVSIKLFIHLVDARHLNLEIDKNAKENIQALLRPDQAYLSLFTKFDKLNKNEQHRLFLNAPKPFLINSAHFNALSSKYPTLEVVRQTLLKYLLTNPL</sequence>
<protein>
    <recommendedName>
        <fullName evidence="1">Probable GTP-binding protein EngB</fullName>
    </recommendedName>
</protein>
<keyword id="KW-0131">Cell cycle</keyword>
<keyword id="KW-0132">Cell division</keyword>
<keyword id="KW-0342">GTP-binding</keyword>
<keyword id="KW-0460">Magnesium</keyword>
<keyword id="KW-0479">Metal-binding</keyword>
<keyword id="KW-0547">Nucleotide-binding</keyword>
<keyword id="KW-0717">Septation</keyword>
<dbReference type="EMBL" id="CP001072">
    <property type="protein sequence ID" value="ACD49016.1"/>
    <property type="molecule type" value="Genomic_DNA"/>
</dbReference>
<dbReference type="SMR" id="B2UVY4"/>
<dbReference type="KEGG" id="hps:HPSH_08165"/>
<dbReference type="HOGENOM" id="CLU_033732_3_2_7"/>
<dbReference type="GO" id="GO:0005829">
    <property type="term" value="C:cytosol"/>
    <property type="evidence" value="ECO:0007669"/>
    <property type="project" value="TreeGrafter"/>
</dbReference>
<dbReference type="GO" id="GO:0005525">
    <property type="term" value="F:GTP binding"/>
    <property type="evidence" value="ECO:0007669"/>
    <property type="project" value="UniProtKB-UniRule"/>
</dbReference>
<dbReference type="GO" id="GO:0046872">
    <property type="term" value="F:metal ion binding"/>
    <property type="evidence" value="ECO:0007669"/>
    <property type="project" value="UniProtKB-KW"/>
</dbReference>
<dbReference type="GO" id="GO:0000917">
    <property type="term" value="P:division septum assembly"/>
    <property type="evidence" value="ECO:0007669"/>
    <property type="project" value="UniProtKB-KW"/>
</dbReference>
<dbReference type="CDD" id="cd01876">
    <property type="entry name" value="YihA_EngB"/>
    <property type="match status" value="1"/>
</dbReference>
<dbReference type="FunFam" id="3.40.50.300:FF:002409">
    <property type="entry name" value="Probable GTP-binding protein EngB"/>
    <property type="match status" value="1"/>
</dbReference>
<dbReference type="Gene3D" id="3.40.50.300">
    <property type="entry name" value="P-loop containing nucleotide triphosphate hydrolases"/>
    <property type="match status" value="1"/>
</dbReference>
<dbReference type="HAMAP" id="MF_00321">
    <property type="entry name" value="GTPase_EngB"/>
    <property type="match status" value="1"/>
</dbReference>
<dbReference type="InterPro" id="IPR030393">
    <property type="entry name" value="G_ENGB_dom"/>
</dbReference>
<dbReference type="InterPro" id="IPR006073">
    <property type="entry name" value="GTP-bd"/>
</dbReference>
<dbReference type="InterPro" id="IPR019987">
    <property type="entry name" value="GTP-bd_ribosome_bio_YsxC"/>
</dbReference>
<dbReference type="InterPro" id="IPR027417">
    <property type="entry name" value="P-loop_NTPase"/>
</dbReference>
<dbReference type="NCBIfam" id="TIGR03598">
    <property type="entry name" value="GTPase_YsxC"/>
    <property type="match status" value="1"/>
</dbReference>
<dbReference type="PANTHER" id="PTHR11649:SF13">
    <property type="entry name" value="ENGB-TYPE G DOMAIN-CONTAINING PROTEIN"/>
    <property type="match status" value="1"/>
</dbReference>
<dbReference type="PANTHER" id="PTHR11649">
    <property type="entry name" value="MSS1/TRME-RELATED GTP-BINDING PROTEIN"/>
    <property type="match status" value="1"/>
</dbReference>
<dbReference type="Pfam" id="PF01926">
    <property type="entry name" value="MMR_HSR1"/>
    <property type="match status" value="1"/>
</dbReference>
<dbReference type="SUPFAM" id="SSF52540">
    <property type="entry name" value="P-loop containing nucleoside triphosphate hydrolases"/>
    <property type="match status" value="1"/>
</dbReference>
<dbReference type="PROSITE" id="PS51706">
    <property type="entry name" value="G_ENGB"/>
    <property type="match status" value="1"/>
</dbReference>
<accession>B2UVY4</accession>